<evidence type="ECO:0000255" key="1">
    <source>
        <dbReference type="HAMAP-Rule" id="MF_01830"/>
    </source>
</evidence>
<dbReference type="EC" id="4.2.1.-" evidence="1"/>
<dbReference type="EMBL" id="AE004091">
    <property type="protein sequence ID" value="AAG05504.1"/>
    <property type="molecule type" value="Genomic_DNA"/>
</dbReference>
<dbReference type="PIR" id="F83380">
    <property type="entry name" value="F83380"/>
</dbReference>
<dbReference type="RefSeq" id="NP_250806.1">
    <property type="nucleotide sequence ID" value="NC_002516.2"/>
</dbReference>
<dbReference type="RefSeq" id="WP_003113625.1">
    <property type="nucleotide sequence ID" value="NZ_QZGE01000014.1"/>
</dbReference>
<dbReference type="SMR" id="Q9I1Z9"/>
<dbReference type="STRING" id="208964.PA2116"/>
<dbReference type="PaxDb" id="208964-PA2116"/>
<dbReference type="DNASU" id="878087"/>
<dbReference type="GeneID" id="878087"/>
<dbReference type="KEGG" id="pae:PA2116"/>
<dbReference type="PATRIC" id="fig|208964.12.peg.2206"/>
<dbReference type="PseudoCAP" id="PA2116"/>
<dbReference type="HOGENOM" id="CLU_059759_0_0_6"/>
<dbReference type="InParanoid" id="Q9I1Z9"/>
<dbReference type="OrthoDB" id="149585at2"/>
<dbReference type="PhylomeDB" id="Q9I1Z9"/>
<dbReference type="BioCyc" id="PAER208964:G1FZ6-2154-MONOMER"/>
<dbReference type="Proteomes" id="UP000002438">
    <property type="component" value="Chromosome"/>
</dbReference>
<dbReference type="GO" id="GO:0016829">
    <property type="term" value="F:lyase activity"/>
    <property type="evidence" value="ECO:0007669"/>
    <property type="project" value="UniProtKB-KW"/>
</dbReference>
<dbReference type="FunFam" id="3.30.2040.10:FF:000001">
    <property type="entry name" value="D-glutamate cyclase, mitochondrial"/>
    <property type="match status" value="1"/>
</dbReference>
<dbReference type="Gene3D" id="3.40.1640.10">
    <property type="entry name" value="PSTPO5379-like"/>
    <property type="match status" value="1"/>
</dbReference>
<dbReference type="Gene3D" id="3.30.2040.10">
    <property type="entry name" value="PSTPO5379-like domain"/>
    <property type="match status" value="1"/>
</dbReference>
<dbReference type="HAMAP" id="MF_01830">
    <property type="entry name" value="Hydro_lyase"/>
    <property type="match status" value="1"/>
</dbReference>
<dbReference type="InterPro" id="IPR009906">
    <property type="entry name" value="D-Glu_cyclase"/>
</dbReference>
<dbReference type="InterPro" id="IPR038021">
    <property type="entry name" value="Putative_hydro-lyase"/>
</dbReference>
<dbReference type="InterPro" id="IPR016938">
    <property type="entry name" value="UPF0317"/>
</dbReference>
<dbReference type="NCBIfam" id="NF003969">
    <property type="entry name" value="PRK05463.1"/>
    <property type="match status" value="1"/>
</dbReference>
<dbReference type="PANTHER" id="PTHR32022">
    <property type="entry name" value="D-GLUTAMATE CYCLASE, MITOCHONDRIAL"/>
    <property type="match status" value="1"/>
</dbReference>
<dbReference type="PANTHER" id="PTHR32022:SF10">
    <property type="entry name" value="D-GLUTAMATE CYCLASE, MITOCHONDRIAL"/>
    <property type="match status" value="1"/>
</dbReference>
<dbReference type="Pfam" id="PF07286">
    <property type="entry name" value="D-Glu_cyclase"/>
    <property type="match status" value="1"/>
</dbReference>
<dbReference type="PIRSF" id="PIRSF029755">
    <property type="entry name" value="UCP029755"/>
    <property type="match status" value="1"/>
</dbReference>
<dbReference type="SUPFAM" id="SSF160920">
    <property type="entry name" value="PSTPO5379-like"/>
    <property type="match status" value="1"/>
</dbReference>
<name>Y2116_PSEAE</name>
<sequence>MPEPTFHELAQLPPPVLRQLIRRGDYTGHTSGLGQRHLQANLVILQKSWADEFLRFCALNPRACPLLDVSEPGSPHFARLGADIDVRSDLPRYRVHRRGQEPVEVSDIGTFWEADFVAFAIGCSFSFEQALLDAGIGLRHLELGRNVTMYRSSIATRPSGRLAGPTVVSMRPLKAAEAIRAIQVTSRFPMTHGAPLHLGDPALIGIRDLARPDYGDPVPLAADEIPLFWACGVTPQAVLAEVQPELYISHAPGHMLVSDRLYDEL</sequence>
<proteinExistence type="inferred from homology"/>
<protein>
    <recommendedName>
        <fullName evidence="1">Putative hydro-lyase PA2116</fullName>
        <ecNumber evidence="1">4.2.1.-</ecNumber>
    </recommendedName>
</protein>
<feature type="chain" id="PRO_0000217169" description="Putative hydro-lyase PA2116">
    <location>
        <begin position="1"/>
        <end position="265"/>
    </location>
</feature>
<gene>
    <name type="ordered locus">PA2116</name>
</gene>
<keyword id="KW-0456">Lyase</keyword>
<keyword id="KW-1185">Reference proteome</keyword>
<comment type="similarity">
    <text evidence="1">Belongs to the D-glutamate cyclase family.</text>
</comment>
<reference key="1">
    <citation type="journal article" date="2000" name="Nature">
        <title>Complete genome sequence of Pseudomonas aeruginosa PAO1, an opportunistic pathogen.</title>
        <authorList>
            <person name="Stover C.K."/>
            <person name="Pham X.-Q.T."/>
            <person name="Erwin A.L."/>
            <person name="Mizoguchi S.D."/>
            <person name="Warrener P."/>
            <person name="Hickey M.J."/>
            <person name="Brinkman F.S.L."/>
            <person name="Hufnagle W.O."/>
            <person name="Kowalik D.J."/>
            <person name="Lagrou M."/>
            <person name="Garber R.L."/>
            <person name="Goltry L."/>
            <person name="Tolentino E."/>
            <person name="Westbrock-Wadman S."/>
            <person name="Yuan Y."/>
            <person name="Brody L.L."/>
            <person name="Coulter S.N."/>
            <person name="Folger K.R."/>
            <person name="Kas A."/>
            <person name="Larbig K."/>
            <person name="Lim R.M."/>
            <person name="Smith K.A."/>
            <person name="Spencer D.H."/>
            <person name="Wong G.K.-S."/>
            <person name="Wu Z."/>
            <person name="Paulsen I.T."/>
            <person name="Reizer J."/>
            <person name="Saier M.H. Jr."/>
            <person name="Hancock R.E.W."/>
            <person name="Lory S."/>
            <person name="Olson M.V."/>
        </authorList>
    </citation>
    <scope>NUCLEOTIDE SEQUENCE [LARGE SCALE GENOMIC DNA]</scope>
    <source>
        <strain>ATCC 15692 / DSM 22644 / CIP 104116 / JCM 14847 / LMG 12228 / 1C / PRS 101 / PAO1</strain>
    </source>
</reference>
<organism>
    <name type="scientific">Pseudomonas aeruginosa (strain ATCC 15692 / DSM 22644 / CIP 104116 / JCM 14847 / LMG 12228 / 1C / PRS 101 / PAO1)</name>
    <dbReference type="NCBI Taxonomy" id="208964"/>
    <lineage>
        <taxon>Bacteria</taxon>
        <taxon>Pseudomonadati</taxon>
        <taxon>Pseudomonadota</taxon>
        <taxon>Gammaproteobacteria</taxon>
        <taxon>Pseudomonadales</taxon>
        <taxon>Pseudomonadaceae</taxon>
        <taxon>Pseudomonas</taxon>
    </lineage>
</organism>
<accession>Q9I1Z9</accession>